<organism>
    <name type="scientific">Paracidovorax citrulli (strain AAC00-1)</name>
    <name type="common">Acidovorax citrulli</name>
    <dbReference type="NCBI Taxonomy" id="397945"/>
    <lineage>
        <taxon>Bacteria</taxon>
        <taxon>Pseudomonadati</taxon>
        <taxon>Pseudomonadota</taxon>
        <taxon>Betaproteobacteria</taxon>
        <taxon>Burkholderiales</taxon>
        <taxon>Comamonadaceae</taxon>
        <taxon>Paracidovorax</taxon>
    </lineage>
</organism>
<comment type="function">
    <text evidence="1">Binds the lower part of the 30S subunit head. Binds mRNA in the 70S ribosome, positioning it for translation.</text>
</comment>
<comment type="subunit">
    <text evidence="1">Part of the 30S ribosomal subunit. Forms a tight complex with proteins S10 and S14.</text>
</comment>
<comment type="similarity">
    <text evidence="1">Belongs to the universal ribosomal protein uS3 family.</text>
</comment>
<evidence type="ECO:0000255" key="1">
    <source>
        <dbReference type="HAMAP-Rule" id="MF_01309"/>
    </source>
</evidence>
<evidence type="ECO:0000256" key="2">
    <source>
        <dbReference type="SAM" id="MobiDB-lite"/>
    </source>
</evidence>
<evidence type="ECO:0000305" key="3"/>
<feature type="chain" id="PRO_0000293740" description="Small ribosomal subunit protein uS3">
    <location>
        <begin position="1"/>
        <end position="293"/>
    </location>
</feature>
<feature type="domain" description="KH type-2" evidence="1">
    <location>
        <begin position="39"/>
        <end position="107"/>
    </location>
</feature>
<feature type="region of interest" description="Disordered" evidence="2">
    <location>
        <begin position="210"/>
        <end position="293"/>
    </location>
</feature>
<feature type="compositionally biased region" description="Basic and acidic residues" evidence="2">
    <location>
        <begin position="219"/>
        <end position="238"/>
    </location>
</feature>
<dbReference type="EMBL" id="CP000512">
    <property type="protein sequence ID" value="ABM30951.1"/>
    <property type="molecule type" value="Genomic_DNA"/>
</dbReference>
<dbReference type="RefSeq" id="WP_011793528.1">
    <property type="nucleotide sequence ID" value="NC_008752.1"/>
</dbReference>
<dbReference type="SMR" id="A1TJ13"/>
<dbReference type="STRING" id="397945.Aave_0344"/>
<dbReference type="GeneID" id="79790149"/>
<dbReference type="KEGG" id="aav:Aave_0344"/>
<dbReference type="eggNOG" id="COG0092">
    <property type="taxonomic scope" value="Bacteria"/>
</dbReference>
<dbReference type="HOGENOM" id="CLU_058591_0_2_4"/>
<dbReference type="OrthoDB" id="9806396at2"/>
<dbReference type="Proteomes" id="UP000002596">
    <property type="component" value="Chromosome"/>
</dbReference>
<dbReference type="GO" id="GO:0022627">
    <property type="term" value="C:cytosolic small ribosomal subunit"/>
    <property type="evidence" value="ECO:0007669"/>
    <property type="project" value="TreeGrafter"/>
</dbReference>
<dbReference type="GO" id="GO:0003729">
    <property type="term" value="F:mRNA binding"/>
    <property type="evidence" value="ECO:0007669"/>
    <property type="project" value="UniProtKB-UniRule"/>
</dbReference>
<dbReference type="GO" id="GO:0019843">
    <property type="term" value="F:rRNA binding"/>
    <property type="evidence" value="ECO:0007669"/>
    <property type="project" value="UniProtKB-UniRule"/>
</dbReference>
<dbReference type="GO" id="GO:0003735">
    <property type="term" value="F:structural constituent of ribosome"/>
    <property type="evidence" value="ECO:0007669"/>
    <property type="project" value="InterPro"/>
</dbReference>
<dbReference type="GO" id="GO:0006412">
    <property type="term" value="P:translation"/>
    <property type="evidence" value="ECO:0007669"/>
    <property type="project" value="UniProtKB-UniRule"/>
</dbReference>
<dbReference type="CDD" id="cd02412">
    <property type="entry name" value="KH-II_30S_S3"/>
    <property type="match status" value="1"/>
</dbReference>
<dbReference type="FunFam" id="3.30.1140.32:FF:000006">
    <property type="entry name" value="30S ribosomal protein S3"/>
    <property type="match status" value="1"/>
</dbReference>
<dbReference type="FunFam" id="3.30.300.20:FF:000001">
    <property type="entry name" value="30S ribosomal protein S3"/>
    <property type="match status" value="1"/>
</dbReference>
<dbReference type="Gene3D" id="3.30.300.20">
    <property type="match status" value="1"/>
</dbReference>
<dbReference type="Gene3D" id="3.30.1140.32">
    <property type="entry name" value="Ribosomal protein S3, C-terminal domain"/>
    <property type="match status" value="1"/>
</dbReference>
<dbReference type="HAMAP" id="MF_01309_B">
    <property type="entry name" value="Ribosomal_uS3_B"/>
    <property type="match status" value="1"/>
</dbReference>
<dbReference type="InterPro" id="IPR004087">
    <property type="entry name" value="KH_dom"/>
</dbReference>
<dbReference type="InterPro" id="IPR015946">
    <property type="entry name" value="KH_dom-like_a/b"/>
</dbReference>
<dbReference type="InterPro" id="IPR004044">
    <property type="entry name" value="KH_dom_type_2"/>
</dbReference>
<dbReference type="InterPro" id="IPR009019">
    <property type="entry name" value="KH_sf_prok-type"/>
</dbReference>
<dbReference type="InterPro" id="IPR036419">
    <property type="entry name" value="Ribosomal_S3_C_sf"/>
</dbReference>
<dbReference type="InterPro" id="IPR005704">
    <property type="entry name" value="Ribosomal_uS3_bac-typ"/>
</dbReference>
<dbReference type="InterPro" id="IPR001351">
    <property type="entry name" value="Ribosomal_uS3_C"/>
</dbReference>
<dbReference type="InterPro" id="IPR018280">
    <property type="entry name" value="Ribosomal_uS3_CS"/>
</dbReference>
<dbReference type="NCBIfam" id="TIGR01009">
    <property type="entry name" value="rpsC_bact"/>
    <property type="match status" value="1"/>
</dbReference>
<dbReference type="PANTHER" id="PTHR11760">
    <property type="entry name" value="30S/40S RIBOSOMAL PROTEIN S3"/>
    <property type="match status" value="1"/>
</dbReference>
<dbReference type="PANTHER" id="PTHR11760:SF19">
    <property type="entry name" value="SMALL RIBOSOMAL SUBUNIT PROTEIN US3C"/>
    <property type="match status" value="1"/>
</dbReference>
<dbReference type="Pfam" id="PF07650">
    <property type="entry name" value="KH_2"/>
    <property type="match status" value="1"/>
</dbReference>
<dbReference type="Pfam" id="PF00189">
    <property type="entry name" value="Ribosomal_S3_C"/>
    <property type="match status" value="1"/>
</dbReference>
<dbReference type="SMART" id="SM00322">
    <property type="entry name" value="KH"/>
    <property type="match status" value="1"/>
</dbReference>
<dbReference type="SUPFAM" id="SSF54814">
    <property type="entry name" value="Prokaryotic type KH domain (KH-domain type II)"/>
    <property type="match status" value="1"/>
</dbReference>
<dbReference type="SUPFAM" id="SSF54821">
    <property type="entry name" value="Ribosomal protein S3 C-terminal domain"/>
    <property type="match status" value="1"/>
</dbReference>
<dbReference type="PROSITE" id="PS50823">
    <property type="entry name" value="KH_TYPE_2"/>
    <property type="match status" value="1"/>
</dbReference>
<dbReference type="PROSITE" id="PS00548">
    <property type="entry name" value="RIBOSOMAL_S3"/>
    <property type="match status" value="1"/>
</dbReference>
<sequence>MGQKIHPTGFRLAVSRNWASRWYANNRDFAGMLAEDIKVREYLKAKLKNAAVSRILIERPAKNARITIYSARPGVVIGKKGEDIENLKKELASRLGVPVAVNIEEVRKPEIDAKLIADSITQQLEKRIMFRRAMKRAMQNAMRLGAQGIKIMSSGRLNGIEIARTEWYREGRVPLHTLRADIDYGTSEAFTTYGVIGLKVWVYKGDTLGRNDLPAVETPRPEEERRPRGPRRDGRPGGDRAGAGRGPRRPMGGNAAPADGSDKPAGAGGTDATAVKRVRKVDAPATAADGKGE</sequence>
<name>RS3_PARC0</name>
<reference key="1">
    <citation type="submission" date="2006-12" db="EMBL/GenBank/DDBJ databases">
        <title>Complete sequence of Acidovorax avenae subsp. citrulli AAC00-1.</title>
        <authorList>
            <person name="Copeland A."/>
            <person name="Lucas S."/>
            <person name="Lapidus A."/>
            <person name="Barry K."/>
            <person name="Detter J.C."/>
            <person name="Glavina del Rio T."/>
            <person name="Dalin E."/>
            <person name="Tice H."/>
            <person name="Pitluck S."/>
            <person name="Kiss H."/>
            <person name="Brettin T."/>
            <person name="Bruce D."/>
            <person name="Han C."/>
            <person name="Tapia R."/>
            <person name="Gilna P."/>
            <person name="Schmutz J."/>
            <person name="Larimer F."/>
            <person name="Land M."/>
            <person name="Hauser L."/>
            <person name="Kyrpides N."/>
            <person name="Kim E."/>
            <person name="Stahl D."/>
            <person name="Richardson P."/>
        </authorList>
    </citation>
    <scope>NUCLEOTIDE SEQUENCE [LARGE SCALE GENOMIC DNA]</scope>
    <source>
        <strain>AAC00-1</strain>
    </source>
</reference>
<accession>A1TJ13</accession>
<protein>
    <recommendedName>
        <fullName evidence="1">Small ribosomal subunit protein uS3</fullName>
    </recommendedName>
    <alternativeName>
        <fullName evidence="3">30S ribosomal protein S3</fullName>
    </alternativeName>
</protein>
<gene>
    <name evidence="1" type="primary">rpsC</name>
    <name type="ordered locus">Aave_0344</name>
</gene>
<proteinExistence type="inferred from homology"/>
<keyword id="KW-0687">Ribonucleoprotein</keyword>
<keyword id="KW-0689">Ribosomal protein</keyword>
<keyword id="KW-0694">RNA-binding</keyword>
<keyword id="KW-0699">rRNA-binding</keyword>